<accession>B0R7F7</accession>
<feature type="chain" id="PRO_1000115814" description="DNA polymerase sliding clamp">
    <location>
        <begin position="1"/>
        <end position="247"/>
    </location>
</feature>
<sequence>MFKAIVSADTLQETLDSVSVLVDECKIHLDDDTLSIRAVDPASVGMVDLDLAATAFESYEADGGLIGVNLSRLEDIAGMADAGQLIQLELDEETRKLHIQIDGLEYTLALIDPDSIRQEPDIPDLDLPAHVAIEGRDIDRAVTAADMVSDHIALGVDTGDDLFYVNAEGDTDDVHLELAPDQLIDLDAGDAHSLFSLDYLKDMNKAIPTTAEVELELGDEFPIKLHFDIADAQGHVTYMLAPRIQSN</sequence>
<keyword id="KW-0235">DNA replication</keyword>
<keyword id="KW-0238">DNA-binding</keyword>
<dbReference type="EMBL" id="AM774415">
    <property type="protein sequence ID" value="CAP14676.1"/>
    <property type="molecule type" value="Genomic_DNA"/>
</dbReference>
<dbReference type="RefSeq" id="WP_010903677.1">
    <property type="nucleotide sequence ID" value="NC_010364.1"/>
</dbReference>
<dbReference type="SMR" id="B0R7F7"/>
<dbReference type="EnsemblBacteria" id="CAP14676">
    <property type="protein sequence ID" value="CAP14676"/>
    <property type="gene ID" value="OE_4165R"/>
</dbReference>
<dbReference type="KEGG" id="hsl:OE_4165R"/>
<dbReference type="HOGENOM" id="CLU_043978_1_1_2"/>
<dbReference type="PhylomeDB" id="B0R7F7"/>
<dbReference type="Proteomes" id="UP000001321">
    <property type="component" value="Chromosome"/>
</dbReference>
<dbReference type="GO" id="GO:0003677">
    <property type="term" value="F:DNA binding"/>
    <property type="evidence" value="ECO:0007669"/>
    <property type="project" value="UniProtKB-UniRule"/>
</dbReference>
<dbReference type="GO" id="GO:0030337">
    <property type="term" value="F:DNA polymerase processivity factor activity"/>
    <property type="evidence" value="ECO:0007669"/>
    <property type="project" value="UniProtKB-UniRule"/>
</dbReference>
<dbReference type="GO" id="GO:0006272">
    <property type="term" value="P:leading strand elongation"/>
    <property type="evidence" value="ECO:0007669"/>
    <property type="project" value="TreeGrafter"/>
</dbReference>
<dbReference type="GO" id="GO:0006275">
    <property type="term" value="P:regulation of DNA replication"/>
    <property type="evidence" value="ECO:0007669"/>
    <property type="project" value="UniProtKB-UniRule"/>
</dbReference>
<dbReference type="CDD" id="cd00577">
    <property type="entry name" value="PCNA"/>
    <property type="match status" value="1"/>
</dbReference>
<dbReference type="Gene3D" id="3.70.10.10">
    <property type="match status" value="1"/>
</dbReference>
<dbReference type="HAMAP" id="MF_00317">
    <property type="entry name" value="DNApol_clamp_arch"/>
    <property type="match status" value="1"/>
</dbReference>
<dbReference type="InterPro" id="IPR046938">
    <property type="entry name" value="DNA_clamp_sf"/>
</dbReference>
<dbReference type="InterPro" id="IPR000730">
    <property type="entry name" value="Pr_cel_nuc_antig"/>
</dbReference>
<dbReference type="InterPro" id="IPR022649">
    <property type="entry name" value="Pr_cel_nuc_antig_C"/>
</dbReference>
<dbReference type="InterPro" id="IPR022659">
    <property type="entry name" value="Pr_cel_nuc_antig_CS"/>
</dbReference>
<dbReference type="InterPro" id="IPR022648">
    <property type="entry name" value="Pr_cel_nuc_antig_N"/>
</dbReference>
<dbReference type="NCBIfam" id="NF002222">
    <property type="entry name" value="PRK01115.1-5"/>
    <property type="match status" value="1"/>
</dbReference>
<dbReference type="PANTHER" id="PTHR11352">
    <property type="entry name" value="PROLIFERATING CELL NUCLEAR ANTIGEN"/>
    <property type="match status" value="1"/>
</dbReference>
<dbReference type="PANTHER" id="PTHR11352:SF0">
    <property type="entry name" value="PROLIFERATING CELL NUCLEAR ANTIGEN"/>
    <property type="match status" value="1"/>
</dbReference>
<dbReference type="Pfam" id="PF02747">
    <property type="entry name" value="PCNA_C"/>
    <property type="match status" value="1"/>
</dbReference>
<dbReference type="Pfam" id="PF00705">
    <property type="entry name" value="PCNA_N"/>
    <property type="match status" value="1"/>
</dbReference>
<dbReference type="PRINTS" id="PR00339">
    <property type="entry name" value="PCNACYCLIN"/>
</dbReference>
<dbReference type="SUPFAM" id="SSF55979">
    <property type="entry name" value="DNA clamp"/>
    <property type="match status" value="1"/>
</dbReference>
<dbReference type="PROSITE" id="PS01251">
    <property type="entry name" value="PCNA_1"/>
    <property type="match status" value="1"/>
</dbReference>
<organism>
    <name type="scientific">Halobacterium salinarum (strain ATCC 29341 / DSM 671 / R1)</name>
    <dbReference type="NCBI Taxonomy" id="478009"/>
    <lineage>
        <taxon>Archaea</taxon>
        <taxon>Methanobacteriati</taxon>
        <taxon>Methanobacteriota</taxon>
        <taxon>Stenosarchaea group</taxon>
        <taxon>Halobacteria</taxon>
        <taxon>Halobacteriales</taxon>
        <taxon>Halobacteriaceae</taxon>
        <taxon>Halobacterium</taxon>
        <taxon>Halobacterium salinarum NRC-34001</taxon>
    </lineage>
</organism>
<reference key="1">
    <citation type="journal article" date="2008" name="Genomics">
        <title>Evolution in the laboratory: the genome of Halobacterium salinarum strain R1 compared to that of strain NRC-1.</title>
        <authorList>
            <person name="Pfeiffer F."/>
            <person name="Schuster S.C."/>
            <person name="Broicher A."/>
            <person name="Falb M."/>
            <person name="Palm P."/>
            <person name="Rodewald K."/>
            <person name="Ruepp A."/>
            <person name="Soppa J."/>
            <person name="Tittor J."/>
            <person name="Oesterhelt D."/>
        </authorList>
    </citation>
    <scope>NUCLEOTIDE SEQUENCE [LARGE SCALE GENOMIC DNA]</scope>
    <source>
        <strain>ATCC 29341 / DSM 671 / R1</strain>
    </source>
</reference>
<evidence type="ECO:0000255" key="1">
    <source>
        <dbReference type="HAMAP-Rule" id="MF_00317"/>
    </source>
</evidence>
<comment type="function">
    <text evidence="1">Sliding clamp subunit that acts as a moving platform for DNA processing. Responsible for tethering the catalytic subunit of DNA polymerase and other proteins to DNA during high-speed replication.</text>
</comment>
<comment type="subunit">
    <text evidence="1">Homotrimer. The subunits circularize to form a toroid; DNA passes through its center. Replication factor C (RFC) is required to load the toroid on the DNA.</text>
</comment>
<comment type="similarity">
    <text evidence="1">Belongs to the PCNA family.</text>
</comment>
<name>PCNA_HALS3</name>
<gene>
    <name evidence="1" type="primary">pcn</name>
    <name type="ordered locus">OE_4165R</name>
</gene>
<proteinExistence type="inferred from homology"/>
<protein>
    <recommendedName>
        <fullName evidence="1">DNA polymerase sliding clamp</fullName>
    </recommendedName>
    <alternativeName>
        <fullName evidence="1">Proliferating cell nuclear antigen homolog</fullName>
        <shortName evidence="1">PCNA</shortName>
    </alternativeName>
</protein>